<name>CAF20_YEAS7</name>
<proteinExistence type="inferred from homology"/>
<reference key="1">
    <citation type="journal article" date="2007" name="Proc. Natl. Acad. Sci. U.S.A.">
        <title>Genome sequencing and comparative analysis of Saccharomyces cerevisiae strain YJM789.</title>
        <authorList>
            <person name="Wei W."/>
            <person name="McCusker J.H."/>
            <person name="Hyman R.W."/>
            <person name="Jones T."/>
            <person name="Ning Y."/>
            <person name="Cao Z."/>
            <person name="Gu Z."/>
            <person name="Bruno D."/>
            <person name="Miranda M."/>
            <person name="Nguyen M."/>
            <person name="Wilhelmy J."/>
            <person name="Komp C."/>
            <person name="Tamse R."/>
            <person name="Wang X."/>
            <person name="Jia P."/>
            <person name="Luedi P."/>
            <person name="Oefner P.J."/>
            <person name="David L."/>
            <person name="Dietrich F.S."/>
            <person name="Li Y."/>
            <person name="Davis R.W."/>
            <person name="Steinmetz L.M."/>
        </authorList>
    </citation>
    <scope>NUCLEOTIDE SEQUENCE [LARGE SCALE GENOMIC DNA]</scope>
    <source>
        <strain>YJM789</strain>
    </source>
</reference>
<protein>
    <recommendedName>
        <fullName>Cap-associated protein CAF20</fullName>
    </recommendedName>
    <alternativeName>
        <fullName>20 kDa cap-associated protein</fullName>
    </alternativeName>
    <alternativeName>
        <fullName>CCR4-associated factor 2</fullName>
    </alternativeName>
    <alternativeName>
        <fullName>p20</fullName>
    </alternativeName>
</protein>
<evidence type="ECO:0000250" key="1"/>
<evidence type="ECO:0000250" key="2">
    <source>
        <dbReference type="UniProtKB" id="P12962"/>
    </source>
</evidence>
<evidence type="ECO:0000256" key="3">
    <source>
        <dbReference type="SAM" id="MobiDB-lite"/>
    </source>
</evidence>
<evidence type="ECO:0000305" key="4"/>
<gene>
    <name type="primary">CAF20</name>
    <name type="ORF">SCY_5328</name>
</gene>
<sequence>MIKYTIDELFQLKPSVTLEVNFDAVEFRAIIEKVKQLQHLKEEEFNSHHVGHFGRRRSSHHHGRPKIKHNKPKVTTDSDGWCTFEAKKKGSGEDDEEETETTPTSTVPVATIAQETLKVKPNNKNISSNRPADTRDIVADKPILGFNAFAALESEDEDDEA</sequence>
<feature type="chain" id="PRO_0000330092" description="Cap-associated protein CAF20">
    <location>
        <begin position="1"/>
        <end position="161"/>
    </location>
</feature>
<feature type="region of interest" description="Disordered" evidence="3">
    <location>
        <begin position="52"/>
        <end position="108"/>
    </location>
</feature>
<feature type="compositionally biased region" description="Basic residues" evidence="3">
    <location>
        <begin position="52"/>
        <end position="72"/>
    </location>
</feature>
<feature type="modified residue" description="Phosphoserine" evidence="2">
    <location>
        <position position="78"/>
    </location>
</feature>
<feature type="modified residue" description="Phosphoserine" evidence="2">
    <location>
        <position position="91"/>
    </location>
</feature>
<feature type="modified residue" description="Phosphothreonine" evidence="2">
    <location>
        <position position="99"/>
    </location>
</feature>
<feature type="modified residue" description="Phosphothreonine" evidence="2">
    <location>
        <position position="101"/>
    </location>
</feature>
<feature type="modified residue" description="Phosphothreonine" evidence="2">
    <location>
        <position position="102"/>
    </location>
</feature>
<feature type="modified residue" description="Phosphoserine" evidence="2">
    <location>
        <position position="154"/>
    </location>
</feature>
<organism>
    <name type="scientific">Saccharomyces cerevisiae (strain YJM789)</name>
    <name type="common">Baker's yeast</name>
    <dbReference type="NCBI Taxonomy" id="307796"/>
    <lineage>
        <taxon>Eukaryota</taxon>
        <taxon>Fungi</taxon>
        <taxon>Dikarya</taxon>
        <taxon>Ascomycota</taxon>
        <taxon>Saccharomycotina</taxon>
        <taxon>Saccharomycetes</taxon>
        <taxon>Saccharomycetales</taxon>
        <taxon>Saccharomycetaceae</taxon>
        <taxon>Saccharomyces</taxon>
    </lineage>
</organism>
<accession>A6ZPB3</accession>
<dbReference type="EMBL" id="AAFW02000032">
    <property type="protein sequence ID" value="EDN63603.1"/>
    <property type="molecule type" value="Genomic_DNA"/>
</dbReference>
<dbReference type="SMR" id="A6ZPB3"/>
<dbReference type="HOGENOM" id="CLU_128343_0_0_1"/>
<dbReference type="Proteomes" id="UP000007060">
    <property type="component" value="Unassembled WGS sequence"/>
</dbReference>
<dbReference type="GO" id="GO:0005737">
    <property type="term" value="C:cytoplasm"/>
    <property type="evidence" value="ECO:0007669"/>
    <property type="project" value="UniProtKB-SubCell"/>
</dbReference>
<dbReference type="GO" id="GO:0008190">
    <property type="term" value="F:eukaryotic initiation factor 4E binding"/>
    <property type="evidence" value="ECO:0007669"/>
    <property type="project" value="InterPro"/>
</dbReference>
<dbReference type="GO" id="GO:0003743">
    <property type="term" value="F:translation initiation factor activity"/>
    <property type="evidence" value="ECO:0007669"/>
    <property type="project" value="UniProtKB-KW"/>
</dbReference>
<dbReference type="GO" id="GO:0017148">
    <property type="term" value="P:negative regulation of translation"/>
    <property type="evidence" value="ECO:0007669"/>
    <property type="project" value="UniProtKB-KW"/>
</dbReference>
<dbReference type="InterPro" id="IPR031456">
    <property type="entry name" value="Caf20"/>
</dbReference>
<dbReference type="Pfam" id="PF17052">
    <property type="entry name" value="CAF20"/>
    <property type="match status" value="1"/>
</dbReference>
<comment type="function">
    <text evidence="1">Acts as an inhibitor of cap-dependent translation. Competes with eIF4G1/TIF4631 and EAP1 for binding to eIF4E/TIF45 and interferes with the formation of the eIF4F complex, inhibiting translation and stabilizing mRNA. Binding affinity for eIF4E/TIF45 is 10-fold less than that of eIF4G1/TIF4631. Required for induction of pseudohyphal growth in response to nitrogen limitation, probably by regulating STE12 translation (By similarity).</text>
</comment>
<comment type="subunit">
    <text evidence="1">Interacts with TIF45.</text>
</comment>
<comment type="subcellular location">
    <subcellularLocation>
        <location evidence="1">Cytoplasm</location>
    </subcellularLocation>
</comment>
<comment type="PTM">
    <text evidence="1">Phosphorylated by casein kinase II complex (CK2).</text>
</comment>
<comment type="similarity">
    <text evidence="4">Belongs to the CAF20 family.</text>
</comment>
<keyword id="KW-0963">Cytoplasm</keyword>
<keyword id="KW-0396">Initiation factor</keyword>
<keyword id="KW-0597">Phosphoprotein</keyword>
<keyword id="KW-0648">Protein biosynthesis</keyword>
<keyword id="KW-0652">Protein synthesis inhibitor</keyword>
<keyword id="KW-0810">Translation regulation</keyword>